<keyword id="KW-1003">Cell membrane</keyword>
<keyword id="KW-0225">Disease variant</keyword>
<keyword id="KW-0325">Glycoprotein</keyword>
<keyword id="KW-1063">Hypotrichosis</keyword>
<keyword id="KW-0472">Membrane</keyword>
<keyword id="KW-1267">Proteomics identification</keyword>
<keyword id="KW-1185">Reference proteome</keyword>
<keyword id="KW-0732">Signal</keyword>
<keyword id="KW-0812">Transmembrane</keyword>
<keyword id="KW-1133">Transmembrane helix</keyword>
<keyword id="KW-0879">Wnt signaling pathway</keyword>
<gene>
    <name evidence="8" type="primary">APCDD1</name>
    <name evidence="7" type="synonym">DRAPC1</name>
    <name type="ORF">FP7019</name>
</gene>
<name>APCD1_HUMAN</name>
<comment type="function">
    <text evidence="3 4">Negative regulator of the Wnt signaling pathway. Inhibits Wnt signaling in a cell-autonomous manner and functions upstream of beta-catenin. May act via its interaction with Wnt and LRP proteins. May play a role in colorectal tumorigenesis.</text>
</comment>
<comment type="subunit">
    <text evidence="4">Homodimer. Interacts with LRP5 and WNT3A.</text>
</comment>
<comment type="interaction">
    <interactant intactId="EBI-2683489">
        <id>Q8J025</id>
    </interactant>
    <interactant intactId="EBI-2683489">
        <id>Q8J025</id>
        <label>APCDD1</label>
    </interactant>
    <organismsDiffer>false</organismsDiffer>
    <experiments>2</experiments>
</comment>
<comment type="interaction">
    <interactant intactId="EBI-2683489">
        <id>Q8J025</id>
    </interactant>
    <interactant intactId="EBI-2466421">
        <id>O75197</id>
        <label>LRP5</label>
    </interactant>
    <organismsDiffer>false</organismsDiffer>
    <experiments>3</experiments>
</comment>
<comment type="interaction">
    <interactant intactId="EBI-2683489">
        <id>Q8J025</id>
    </interactant>
    <interactant intactId="EBI-6173037">
        <id>P56704</id>
        <label>WNT3A</label>
    </interactant>
    <organismsDiffer>false</organismsDiffer>
    <experiments>3</experiments>
</comment>
<comment type="subcellular location">
    <subcellularLocation>
        <location evidence="4">Cell membrane</location>
        <topology evidence="4">Single-pass type I membrane protein</topology>
    </subcellularLocation>
</comment>
<comment type="tissue specificity">
    <text evidence="3 4">Abundantly expressed in heart, pancreas, prostate and ovary. Moderately expressed in lung, liver, kidney, spleen, thymus, colon and peripheral lymphocytes. Abundantly expressed in both the epidermal and dermal compartments of the hair follicle. Present in scalp skin Highly expressed in the hair follicle dermal papilla, the matrix, and the hair shaft (at protein level).</text>
</comment>
<comment type="induction">
    <text evidence="3">Target gene of the Wnt/Beta-catenin pathway, transcriptionally regulated by the CTNNB1/TF7L2 complex.</text>
</comment>
<comment type="PTM">
    <text evidence="4">N-Glycosylated.</text>
</comment>
<comment type="disease" evidence="4">
    <disease id="DI-02718">
        <name>Hypotrichosis 1</name>
        <acronym>HYPT1</acronym>
        <description>A rare form of non-syndromic hereditary hypotrichosis without characteristic hair shaft anomalies. Affected individuals typically show normal hair at birth, but hair loss and thinning of the hair shaft start during early childhood and progress with age. HYPT1 inheritance is autosomal dominant.</description>
        <dbReference type="MIM" id="605389"/>
    </disease>
    <text>The disease is caused by variants affecting the gene represented in this entry.</text>
</comment>
<comment type="similarity">
    <text evidence="5">Belongs to the APCDD1 family.</text>
</comment>
<comment type="sequence caution" evidence="5">
    <conflict type="frameshift">
        <sequence resource="EMBL-CDS" id="AAQ04816"/>
    </conflict>
</comment>
<comment type="sequence caution" evidence="5">
    <conflict type="erroneous initiation">
        <sequence resource="EMBL-CDS" id="BAG62412"/>
    </conflict>
    <text>Truncated N-terminus.</text>
</comment>
<comment type="sequence caution" evidence="5">
    <conflict type="erroneous initiation">
        <sequence resource="EMBL-CDS" id="BAG64192"/>
    </conflict>
    <text>Truncated N-terminus.</text>
</comment>
<organism>
    <name type="scientific">Homo sapiens</name>
    <name type="common">Human</name>
    <dbReference type="NCBI Taxonomy" id="9606"/>
    <lineage>
        <taxon>Eukaryota</taxon>
        <taxon>Metazoa</taxon>
        <taxon>Chordata</taxon>
        <taxon>Craniata</taxon>
        <taxon>Vertebrata</taxon>
        <taxon>Euteleostomi</taxon>
        <taxon>Mammalia</taxon>
        <taxon>Eutheria</taxon>
        <taxon>Euarchontoglires</taxon>
        <taxon>Primates</taxon>
        <taxon>Haplorrhini</taxon>
        <taxon>Catarrhini</taxon>
        <taxon>Hominidae</taxon>
        <taxon>Homo</taxon>
    </lineage>
</organism>
<sequence>MSWPRRLLLRYLFPALLLHGLGEGSALLHPDSRSHPRSLEKSAWRAFKESQCHHMLKHLHNGARITVQMPPTIEGHWVSTGCEVRSGPEFITRSYRFYHNNTFKAYQFYYGSNRCTNPTYTLIIRGKIRLRQASWIIRGGTEADYQLHNVQVICHTEAVAEKLGQQVNRTCPGFLADGGPWVQDVAYDLWREENGCECTKAVNFAMHELQLIRVEKQYLHHNLDHLVEELFLGDIHTDATQRMFYRPSSYQPPLQNAKNHDHACIACRIIYRSDEHHPPILPPKADLTIGLHGEWVSQRCEVRPEVLFLTRHFIFHDNNNTWEGHYYHYSDPVCKHPTFSIYARGRYSRGVLSSRVMGGTEFVFKVNHMKVTPMDAATASLLNVFNGNECGAEGSWQVGIQQDVTHTNGCVALGIKLPHTEYEIFKMEQDARGRYLLFNGQRPSDGSSPDRPEKRATSYQMPLVQCASSSPRAEDLAEDSGSSLYGRAPGRHTWSLLLAALACLVPLLHWNIRR</sequence>
<protein>
    <recommendedName>
        <fullName>Protein APCDD1</fullName>
    </recommendedName>
    <alternativeName>
        <fullName>Adenomatosis polyposis coli down-regulated 1 protein</fullName>
    </alternativeName>
</protein>
<reference evidence="5 7" key="1">
    <citation type="journal article" date="2002" name="Cancer Res.">
        <title>Isolation of a novel human gene, APCDD1, as a direct target of the b-catenin/T-cell factor 4 complex with probable involvement in colorectal carcinogenesis.</title>
        <authorList>
            <person name="Takahashi M."/>
            <person name="Fujita M."/>
            <person name="Furukawa Y."/>
            <person name="Hamamoto R."/>
            <person name="Shimokawa T."/>
            <person name="Miwa N."/>
            <person name="Ogawa M."/>
            <person name="Nakamura Y."/>
        </authorList>
    </citation>
    <scope>NUCLEOTIDE SEQUENCE [MRNA]</scope>
    <scope>FUNCTION</scope>
    <scope>TISSUE SPECIFICITY</scope>
    <scope>INDUCTION</scope>
    <source>
        <tissue evidence="3 7">Colon</tissue>
    </source>
</reference>
<reference key="2">
    <citation type="journal article" date="2004" name="Nat. Genet.">
        <title>Complete sequencing and characterization of 21,243 full-length human cDNAs.</title>
        <authorList>
            <person name="Ota T."/>
            <person name="Suzuki Y."/>
            <person name="Nishikawa T."/>
            <person name="Otsuki T."/>
            <person name="Sugiyama T."/>
            <person name="Irie R."/>
            <person name="Wakamatsu A."/>
            <person name="Hayashi K."/>
            <person name="Sato H."/>
            <person name="Nagai K."/>
            <person name="Kimura K."/>
            <person name="Makita H."/>
            <person name="Sekine M."/>
            <person name="Obayashi M."/>
            <person name="Nishi T."/>
            <person name="Shibahara T."/>
            <person name="Tanaka T."/>
            <person name="Ishii S."/>
            <person name="Yamamoto J."/>
            <person name="Saito K."/>
            <person name="Kawai Y."/>
            <person name="Isono Y."/>
            <person name="Nakamura Y."/>
            <person name="Nagahari K."/>
            <person name="Murakami K."/>
            <person name="Yasuda T."/>
            <person name="Iwayanagi T."/>
            <person name="Wagatsuma M."/>
            <person name="Shiratori A."/>
            <person name="Sudo H."/>
            <person name="Hosoiri T."/>
            <person name="Kaku Y."/>
            <person name="Kodaira H."/>
            <person name="Kondo H."/>
            <person name="Sugawara M."/>
            <person name="Takahashi M."/>
            <person name="Kanda K."/>
            <person name="Yokoi T."/>
            <person name="Furuya T."/>
            <person name="Kikkawa E."/>
            <person name="Omura Y."/>
            <person name="Abe K."/>
            <person name="Kamihara K."/>
            <person name="Katsuta N."/>
            <person name="Sato K."/>
            <person name="Tanikawa M."/>
            <person name="Yamazaki M."/>
            <person name="Ninomiya K."/>
            <person name="Ishibashi T."/>
            <person name="Yamashita H."/>
            <person name="Murakawa K."/>
            <person name="Fujimori K."/>
            <person name="Tanai H."/>
            <person name="Kimata M."/>
            <person name="Watanabe M."/>
            <person name="Hiraoka S."/>
            <person name="Chiba Y."/>
            <person name="Ishida S."/>
            <person name="Ono Y."/>
            <person name="Takiguchi S."/>
            <person name="Watanabe S."/>
            <person name="Yosida M."/>
            <person name="Hotuta T."/>
            <person name="Kusano J."/>
            <person name="Kanehori K."/>
            <person name="Takahashi-Fujii A."/>
            <person name="Hara H."/>
            <person name="Tanase T.-O."/>
            <person name="Nomura Y."/>
            <person name="Togiya S."/>
            <person name="Komai F."/>
            <person name="Hara R."/>
            <person name="Takeuchi K."/>
            <person name="Arita M."/>
            <person name="Imose N."/>
            <person name="Musashino K."/>
            <person name="Yuuki H."/>
            <person name="Oshima A."/>
            <person name="Sasaki N."/>
            <person name="Aotsuka S."/>
            <person name="Yoshikawa Y."/>
            <person name="Matsunawa H."/>
            <person name="Ichihara T."/>
            <person name="Shiohata N."/>
            <person name="Sano S."/>
            <person name="Moriya S."/>
            <person name="Momiyama H."/>
            <person name="Satoh N."/>
            <person name="Takami S."/>
            <person name="Terashima Y."/>
            <person name="Suzuki O."/>
            <person name="Nakagawa S."/>
            <person name="Senoh A."/>
            <person name="Mizoguchi H."/>
            <person name="Goto Y."/>
            <person name="Shimizu F."/>
            <person name="Wakebe H."/>
            <person name="Hishigaki H."/>
            <person name="Watanabe T."/>
            <person name="Sugiyama A."/>
            <person name="Takemoto M."/>
            <person name="Kawakami B."/>
            <person name="Yamazaki M."/>
            <person name="Watanabe K."/>
            <person name="Kumagai A."/>
            <person name="Itakura S."/>
            <person name="Fukuzumi Y."/>
            <person name="Fujimori Y."/>
            <person name="Komiyama M."/>
            <person name="Tashiro H."/>
            <person name="Tanigami A."/>
            <person name="Fujiwara T."/>
            <person name="Ono T."/>
            <person name="Yamada K."/>
            <person name="Fujii Y."/>
            <person name="Ozaki K."/>
            <person name="Hirao M."/>
            <person name="Ohmori Y."/>
            <person name="Kawabata A."/>
            <person name="Hikiji T."/>
            <person name="Kobatake N."/>
            <person name="Inagaki H."/>
            <person name="Ikema Y."/>
            <person name="Okamoto S."/>
            <person name="Okitani R."/>
            <person name="Kawakami T."/>
            <person name="Noguchi S."/>
            <person name="Itoh T."/>
            <person name="Shigeta K."/>
            <person name="Senba T."/>
            <person name="Matsumura K."/>
            <person name="Nakajima Y."/>
            <person name="Mizuno T."/>
            <person name="Morinaga M."/>
            <person name="Sasaki M."/>
            <person name="Togashi T."/>
            <person name="Oyama M."/>
            <person name="Hata H."/>
            <person name="Watanabe M."/>
            <person name="Komatsu T."/>
            <person name="Mizushima-Sugano J."/>
            <person name="Satoh T."/>
            <person name="Shirai Y."/>
            <person name="Takahashi Y."/>
            <person name="Nakagawa K."/>
            <person name="Okumura K."/>
            <person name="Nagase T."/>
            <person name="Nomura N."/>
            <person name="Kikuchi H."/>
            <person name="Masuho Y."/>
            <person name="Yamashita R."/>
            <person name="Nakai K."/>
            <person name="Yada T."/>
            <person name="Nakamura Y."/>
            <person name="Ohara O."/>
            <person name="Isogai T."/>
            <person name="Sugano S."/>
        </authorList>
    </citation>
    <scope>NUCLEOTIDE SEQUENCE [LARGE SCALE MRNA]</scope>
    <source>
        <tissue>Neuroepithelioma</tissue>
        <tissue>Thymus</tissue>
    </source>
</reference>
<reference evidence="6" key="3">
    <citation type="journal article" date="2004" name="Genome Res.">
        <title>The status, quality, and expansion of the NIH full-length cDNA project: the Mammalian Gene Collection (MGC).</title>
        <authorList>
            <consortium name="The MGC Project Team"/>
        </authorList>
    </citation>
    <scope>NUCLEOTIDE SEQUENCE [LARGE SCALE MRNA]</scope>
    <source>
        <tissue evidence="6">Ovary</tissue>
    </source>
</reference>
<reference key="4">
    <citation type="journal article" date="2004" name="Proc. Natl. Acad. Sci. U.S.A.">
        <title>Large-scale cDNA transfection screening for genes related to cancer development and progression.</title>
        <authorList>
            <person name="Wan D."/>
            <person name="Gong Y."/>
            <person name="Qin W."/>
            <person name="Zhang P."/>
            <person name="Li J."/>
            <person name="Wei L."/>
            <person name="Zhou X."/>
            <person name="Li H."/>
            <person name="Qiu X."/>
            <person name="Zhong F."/>
            <person name="He L."/>
            <person name="Yu J."/>
            <person name="Yao G."/>
            <person name="Jiang H."/>
            <person name="Qian L."/>
            <person name="Yu Y."/>
            <person name="Shu H."/>
            <person name="Chen X."/>
            <person name="Xu H."/>
            <person name="Guo M."/>
            <person name="Pan Z."/>
            <person name="Chen Y."/>
            <person name="Ge C."/>
            <person name="Yang S."/>
            <person name="Gu J."/>
        </authorList>
    </citation>
    <scope>NUCLEOTIDE SEQUENCE [LARGE SCALE MRNA] OF 18-514</scope>
</reference>
<reference key="5">
    <citation type="journal article" date="2010" name="Nature">
        <title>APCDD1 is a novel Wnt inhibitor mutated in hereditary hypotrichosis simplex.</title>
        <authorList>
            <person name="Shimomura Y."/>
            <person name="Agalliu D."/>
            <person name="Vonica A."/>
            <person name="Luria V."/>
            <person name="Wajid M."/>
            <person name="Baumer A."/>
            <person name="Belli S."/>
            <person name="Petukhova L."/>
            <person name="Schinzel A."/>
            <person name="Brivanlou A.H."/>
            <person name="Barres B.A."/>
            <person name="Christiano A.M."/>
        </authorList>
    </citation>
    <scope>VARIANT HYPT1 ARG-9</scope>
    <scope>CHARACTERIZATION OF VARIANT HYPT1 ARG-9</scope>
    <scope>GLYCOSYLATION</scope>
    <scope>FUNCTION</scope>
    <scope>SUBCELLULAR LOCATION</scope>
    <scope>TISSUE SPECIFICITY</scope>
    <scope>SUBUNIT</scope>
    <scope>INTERACTION WITH LRP5 AND WNT3A</scope>
</reference>
<proteinExistence type="evidence at protein level"/>
<accession>Q8J025</accession>
<accession>B4DUQ0</accession>
<accession>B4DZT0</accession>
<accession>Q71M25</accession>
<feature type="signal peptide" evidence="1">
    <location>
        <begin position="1"/>
        <end position="26"/>
    </location>
</feature>
<feature type="chain" id="PRO_0000227520" description="Protein APCDD1">
    <location>
        <begin position="27"/>
        <end position="514"/>
    </location>
</feature>
<feature type="topological domain" description="Extracellular" evidence="1">
    <location>
        <begin position="27"/>
        <end position="492"/>
    </location>
</feature>
<feature type="transmembrane region" description="Helical" evidence="1">
    <location>
        <begin position="493"/>
        <end position="512"/>
    </location>
</feature>
<feature type="topological domain" description="Cytoplasmic" evidence="1">
    <location>
        <begin position="513"/>
        <end position="514"/>
    </location>
</feature>
<feature type="region of interest" description="Disordered" evidence="2">
    <location>
        <begin position="438"/>
        <end position="460"/>
    </location>
</feature>
<feature type="glycosylation site" description="N-linked (GlcNAc...) asparagine" evidence="1">
    <location>
        <position position="100"/>
    </location>
</feature>
<feature type="glycosylation site" description="N-linked (GlcNAc...) asparagine" evidence="1">
    <location>
        <position position="168"/>
    </location>
</feature>
<feature type="glycosylation site" description="N-linked (GlcNAc...) asparagine" evidence="1">
    <location>
        <position position="319"/>
    </location>
</feature>
<feature type="sequence variant" id="VAR_063497" description="In HYPT1; dominant-negative mutant that perturbs the translational processing from the endoplasmic reticulum to the plasma membrane; dbSNP:rs267606659." evidence="4">
    <original>L</original>
    <variation>R</variation>
    <location>
        <position position="9"/>
    </location>
</feature>
<feature type="sequence variant" id="VAR_050667" description="In dbSNP:rs3748415.">
    <original>V</original>
    <variation>I</variation>
    <location>
        <position position="150"/>
    </location>
</feature>
<dbReference type="EMBL" id="AB056722">
    <property type="protein sequence ID" value="BAC15563.1"/>
    <property type="molecule type" value="mRNA"/>
</dbReference>
<dbReference type="EMBL" id="AB104887">
    <property type="protein sequence ID" value="BAC65165.1"/>
    <property type="molecule type" value="mRNA"/>
</dbReference>
<dbReference type="EMBL" id="AK300743">
    <property type="protein sequence ID" value="BAG62412.1"/>
    <property type="status" value="ALT_INIT"/>
    <property type="molecule type" value="mRNA"/>
</dbReference>
<dbReference type="EMBL" id="AK303076">
    <property type="protein sequence ID" value="BAG64192.1"/>
    <property type="status" value="ALT_INIT"/>
    <property type="molecule type" value="mRNA"/>
</dbReference>
<dbReference type="EMBL" id="BC053324">
    <property type="protein sequence ID" value="AAH53324.1"/>
    <property type="molecule type" value="mRNA"/>
</dbReference>
<dbReference type="EMBL" id="AF461902">
    <property type="protein sequence ID" value="AAQ04816.1"/>
    <property type="status" value="ALT_FRAME"/>
    <property type="molecule type" value="mRNA"/>
</dbReference>
<dbReference type="CCDS" id="CCDS11849.1"/>
<dbReference type="RefSeq" id="NP_694545.1">
    <property type="nucleotide sequence ID" value="NM_153000.5"/>
</dbReference>
<dbReference type="SMR" id="Q8J025"/>
<dbReference type="BioGRID" id="127063">
    <property type="interactions" value="11"/>
</dbReference>
<dbReference type="DIP" id="DIP-56190N"/>
<dbReference type="FunCoup" id="Q8J025">
    <property type="interactions" value="818"/>
</dbReference>
<dbReference type="IntAct" id="Q8J025">
    <property type="interactions" value="8"/>
</dbReference>
<dbReference type="STRING" id="9606.ENSP00000347433"/>
<dbReference type="GlyCosmos" id="Q8J025">
    <property type="glycosylation" value="3 sites, No reported glycans"/>
</dbReference>
<dbReference type="GlyGen" id="Q8J025">
    <property type="glycosylation" value="3 sites, 1 N-linked glycan (1 site)"/>
</dbReference>
<dbReference type="iPTMnet" id="Q8J025"/>
<dbReference type="PhosphoSitePlus" id="Q8J025"/>
<dbReference type="BioMuta" id="APCDD1"/>
<dbReference type="DMDM" id="74728445"/>
<dbReference type="MassIVE" id="Q8J025"/>
<dbReference type="PaxDb" id="9606-ENSP00000347433"/>
<dbReference type="PeptideAtlas" id="Q8J025"/>
<dbReference type="ProteomicsDB" id="71444"/>
<dbReference type="Antibodypedia" id="2521">
    <property type="antibodies" value="187 antibodies from 25 providers"/>
</dbReference>
<dbReference type="DNASU" id="147495"/>
<dbReference type="Ensembl" id="ENST00000355285.10">
    <property type="protein sequence ID" value="ENSP00000347433.4"/>
    <property type="gene ID" value="ENSG00000154856.13"/>
</dbReference>
<dbReference type="GeneID" id="147495"/>
<dbReference type="KEGG" id="hsa:147495"/>
<dbReference type="MANE-Select" id="ENST00000355285.10">
    <property type="protein sequence ID" value="ENSP00000347433.4"/>
    <property type="RefSeq nucleotide sequence ID" value="NM_153000.5"/>
    <property type="RefSeq protein sequence ID" value="NP_694545.1"/>
</dbReference>
<dbReference type="UCSC" id="uc002kom.5">
    <property type="organism name" value="human"/>
</dbReference>
<dbReference type="AGR" id="HGNC:15718"/>
<dbReference type="CTD" id="147495"/>
<dbReference type="DisGeNET" id="147495"/>
<dbReference type="GeneCards" id="APCDD1"/>
<dbReference type="HGNC" id="HGNC:15718">
    <property type="gene designation" value="APCDD1"/>
</dbReference>
<dbReference type="HPA" id="ENSG00000154856">
    <property type="expression patterns" value="Tissue enhanced (skin)"/>
</dbReference>
<dbReference type="MalaCards" id="APCDD1"/>
<dbReference type="MIM" id="605389">
    <property type="type" value="phenotype"/>
</dbReference>
<dbReference type="MIM" id="607479">
    <property type="type" value="gene"/>
</dbReference>
<dbReference type="neXtProt" id="NX_Q8J025"/>
<dbReference type="OpenTargets" id="ENSG00000154856"/>
<dbReference type="Orphanet" id="55654">
    <property type="disease" value="Hypotrichosis simplex"/>
</dbReference>
<dbReference type="PharmGKB" id="PA24876"/>
<dbReference type="VEuPathDB" id="HostDB:ENSG00000154856"/>
<dbReference type="eggNOG" id="ENOG502QQ0C">
    <property type="taxonomic scope" value="Eukaryota"/>
</dbReference>
<dbReference type="GeneTree" id="ENSGT00640000091492"/>
<dbReference type="HOGENOM" id="CLU_035648_0_0_1"/>
<dbReference type="InParanoid" id="Q8J025"/>
<dbReference type="OMA" id="MPLIQCT"/>
<dbReference type="OrthoDB" id="5985602at2759"/>
<dbReference type="PAN-GO" id="Q8J025">
    <property type="GO annotations" value="3 GO annotations based on evolutionary models"/>
</dbReference>
<dbReference type="PhylomeDB" id="Q8J025"/>
<dbReference type="TreeFam" id="TF329491"/>
<dbReference type="PathwayCommons" id="Q8J025"/>
<dbReference type="SignaLink" id="Q8J025"/>
<dbReference type="BioGRID-ORCS" id="147495">
    <property type="hits" value="14 hits in 1139 CRISPR screens"/>
</dbReference>
<dbReference type="ChiTaRS" id="APCDD1">
    <property type="organism name" value="human"/>
</dbReference>
<dbReference type="GenomeRNAi" id="147495"/>
<dbReference type="Pharos" id="Q8J025">
    <property type="development level" value="Tbio"/>
</dbReference>
<dbReference type="PRO" id="PR:Q8J025"/>
<dbReference type="Proteomes" id="UP000005640">
    <property type="component" value="Chromosome 18"/>
</dbReference>
<dbReference type="RNAct" id="Q8J025">
    <property type="molecule type" value="protein"/>
</dbReference>
<dbReference type="Bgee" id="ENSG00000154856">
    <property type="expression patterns" value="Expressed in upper arm skin and 183 other cell types or tissues"/>
</dbReference>
<dbReference type="ExpressionAtlas" id="Q8J025">
    <property type="expression patterns" value="baseline and differential"/>
</dbReference>
<dbReference type="GO" id="GO:0005886">
    <property type="term" value="C:plasma membrane"/>
    <property type="evidence" value="ECO:0000314"/>
    <property type="project" value="UniProtKB"/>
</dbReference>
<dbReference type="GO" id="GO:0042802">
    <property type="term" value="F:identical protein binding"/>
    <property type="evidence" value="ECO:0000353"/>
    <property type="project" value="IntAct"/>
</dbReference>
<dbReference type="GO" id="GO:0017147">
    <property type="term" value="F:Wnt-protein binding"/>
    <property type="evidence" value="ECO:0000314"/>
    <property type="project" value="UniProtKB"/>
</dbReference>
<dbReference type="GO" id="GO:0043615">
    <property type="term" value="P:astrocyte cell migration"/>
    <property type="evidence" value="ECO:0007669"/>
    <property type="project" value="Ensembl"/>
</dbReference>
<dbReference type="GO" id="GO:0001942">
    <property type="term" value="P:hair follicle development"/>
    <property type="evidence" value="ECO:0000315"/>
    <property type="project" value="UniProtKB"/>
</dbReference>
<dbReference type="GO" id="GO:0030178">
    <property type="term" value="P:negative regulation of Wnt signaling pathway"/>
    <property type="evidence" value="ECO:0000314"/>
    <property type="project" value="UniProtKB"/>
</dbReference>
<dbReference type="GO" id="GO:0042487">
    <property type="term" value="P:regulation of odontogenesis of dentin-containing tooth"/>
    <property type="evidence" value="ECO:0007669"/>
    <property type="project" value="Ensembl"/>
</dbReference>
<dbReference type="GO" id="GO:0016055">
    <property type="term" value="P:Wnt signaling pathway"/>
    <property type="evidence" value="ECO:0007669"/>
    <property type="project" value="UniProtKB-KW"/>
</dbReference>
<dbReference type="InterPro" id="IPR042425">
    <property type="entry name" value="APCDD1"/>
</dbReference>
<dbReference type="InterPro" id="IPR029405">
    <property type="entry name" value="APCDD1_dom"/>
</dbReference>
<dbReference type="PANTHER" id="PTHR31021">
    <property type="entry name" value="ADENOMATOSIS POLYPOSIS COLI DOWN-REGULATED 1"/>
    <property type="match status" value="1"/>
</dbReference>
<dbReference type="PANTHER" id="PTHR31021:SF2">
    <property type="entry name" value="PROTEIN APCDD1"/>
    <property type="match status" value="1"/>
</dbReference>
<dbReference type="Pfam" id="PF14921">
    <property type="entry name" value="APCDDC"/>
    <property type="match status" value="2"/>
</dbReference>
<dbReference type="SMART" id="SM01352">
    <property type="entry name" value="APCDDC"/>
    <property type="match status" value="2"/>
</dbReference>
<evidence type="ECO:0000255" key="1"/>
<evidence type="ECO:0000256" key="2">
    <source>
        <dbReference type="SAM" id="MobiDB-lite"/>
    </source>
</evidence>
<evidence type="ECO:0000269" key="3">
    <source>
    </source>
</evidence>
<evidence type="ECO:0000269" key="4">
    <source>
    </source>
</evidence>
<evidence type="ECO:0000305" key="5"/>
<evidence type="ECO:0000312" key="6">
    <source>
        <dbReference type="EMBL" id="AAH53324.1"/>
    </source>
</evidence>
<evidence type="ECO:0000312" key="7">
    <source>
        <dbReference type="EMBL" id="BAC15563.1"/>
    </source>
</evidence>
<evidence type="ECO:0000312" key="8">
    <source>
        <dbReference type="HGNC" id="HGNC:15718"/>
    </source>
</evidence>